<name>AROB_NITEU</name>
<comment type="function">
    <text evidence="1">Catalyzes the conversion of 3-deoxy-D-arabino-heptulosonate 7-phosphate (DAHP) to dehydroquinate (DHQ).</text>
</comment>
<comment type="catalytic activity">
    <reaction evidence="1">
        <text>7-phospho-2-dehydro-3-deoxy-D-arabino-heptonate = 3-dehydroquinate + phosphate</text>
        <dbReference type="Rhea" id="RHEA:21968"/>
        <dbReference type="ChEBI" id="CHEBI:32364"/>
        <dbReference type="ChEBI" id="CHEBI:43474"/>
        <dbReference type="ChEBI" id="CHEBI:58394"/>
        <dbReference type="EC" id="4.2.3.4"/>
    </reaction>
</comment>
<comment type="cofactor">
    <cofactor evidence="1">
        <name>NAD(+)</name>
        <dbReference type="ChEBI" id="CHEBI:57540"/>
    </cofactor>
</comment>
<comment type="cofactor">
    <cofactor evidence="1">
        <name>Co(2+)</name>
        <dbReference type="ChEBI" id="CHEBI:48828"/>
    </cofactor>
    <cofactor evidence="1">
        <name>Zn(2+)</name>
        <dbReference type="ChEBI" id="CHEBI:29105"/>
    </cofactor>
    <text evidence="1">Binds 1 divalent metal cation per subunit. Can use either Co(2+) or Zn(2+).</text>
</comment>
<comment type="pathway">
    <text evidence="1">Metabolic intermediate biosynthesis; chorismate biosynthesis; chorismate from D-erythrose 4-phosphate and phosphoenolpyruvate: step 2/7.</text>
</comment>
<comment type="subcellular location">
    <subcellularLocation>
        <location evidence="1">Cytoplasm</location>
    </subcellularLocation>
</comment>
<comment type="similarity">
    <text evidence="1">Belongs to the sugar phosphate cyclases superfamily. Dehydroquinate synthase family.</text>
</comment>
<reference key="1">
    <citation type="journal article" date="2003" name="J. Bacteriol.">
        <title>Complete genome sequence of the ammonia-oxidizing bacterium and obligate chemolithoautotroph Nitrosomonas europaea.</title>
        <authorList>
            <person name="Chain P."/>
            <person name="Lamerdin J.E."/>
            <person name="Larimer F.W."/>
            <person name="Regala W."/>
            <person name="Lao V."/>
            <person name="Land M.L."/>
            <person name="Hauser L."/>
            <person name="Hooper A.B."/>
            <person name="Klotz M.G."/>
            <person name="Norton J."/>
            <person name="Sayavedra-Soto L.A."/>
            <person name="Arciero D.M."/>
            <person name="Hommes N.G."/>
            <person name="Whittaker M.M."/>
            <person name="Arp D.J."/>
        </authorList>
    </citation>
    <scope>NUCLEOTIDE SEQUENCE [LARGE SCALE GENOMIC DNA]</scope>
    <source>
        <strain>ATCC 19718 / CIP 103999 / KCTC 2705 / NBRC 14298</strain>
    </source>
</reference>
<dbReference type="EC" id="4.2.3.4" evidence="1"/>
<dbReference type="EMBL" id="AL954747">
    <property type="protein sequence ID" value="CAD85892.1"/>
    <property type="molecule type" value="Genomic_DNA"/>
</dbReference>
<dbReference type="RefSeq" id="WP_011112512.1">
    <property type="nucleotide sequence ID" value="NC_004757.1"/>
</dbReference>
<dbReference type="SMR" id="Q82TB9"/>
<dbReference type="STRING" id="228410.NE1981"/>
<dbReference type="GeneID" id="87105136"/>
<dbReference type="KEGG" id="neu:NE1981"/>
<dbReference type="eggNOG" id="COG0337">
    <property type="taxonomic scope" value="Bacteria"/>
</dbReference>
<dbReference type="HOGENOM" id="CLU_001201_0_2_4"/>
<dbReference type="PhylomeDB" id="Q82TB9"/>
<dbReference type="UniPathway" id="UPA00053">
    <property type="reaction ID" value="UER00085"/>
</dbReference>
<dbReference type="Proteomes" id="UP000001416">
    <property type="component" value="Chromosome"/>
</dbReference>
<dbReference type="GO" id="GO:0005737">
    <property type="term" value="C:cytoplasm"/>
    <property type="evidence" value="ECO:0007669"/>
    <property type="project" value="UniProtKB-SubCell"/>
</dbReference>
<dbReference type="GO" id="GO:0003856">
    <property type="term" value="F:3-dehydroquinate synthase activity"/>
    <property type="evidence" value="ECO:0007669"/>
    <property type="project" value="UniProtKB-UniRule"/>
</dbReference>
<dbReference type="GO" id="GO:0046872">
    <property type="term" value="F:metal ion binding"/>
    <property type="evidence" value="ECO:0007669"/>
    <property type="project" value="UniProtKB-KW"/>
</dbReference>
<dbReference type="GO" id="GO:0000166">
    <property type="term" value="F:nucleotide binding"/>
    <property type="evidence" value="ECO:0007669"/>
    <property type="project" value="UniProtKB-KW"/>
</dbReference>
<dbReference type="GO" id="GO:0008652">
    <property type="term" value="P:amino acid biosynthetic process"/>
    <property type="evidence" value="ECO:0007669"/>
    <property type="project" value="UniProtKB-KW"/>
</dbReference>
<dbReference type="GO" id="GO:0009073">
    <property type="term" value="P:aromatic amino acid family biosynthetic process"/>
    <property type="evidence" value="ECO:0007669"/>
    <property type="project" value="UniProtKB-KW"/>
</dbReference>
<dbReference type="GO" id="GO:0009423">
    <property type="term" value="P:chorismate biosynthetic process"/>
    <property type="evidence" value="ECO:0007669"/>
    <property type="project" value="UniProtKB-UniRule"/>
</dbReference>
<dbReference type="CDD" id="cd08195">
    <property type="entry name" value="DHQS"/>
    <property type="match status" value="1"/>
</dbReference>
<dbReference type="FunFam" id="1.20.1090.10:FF:000002">
    <property type="entry name" value="3-dehydroquinate synthase"/>
    <property type="match status" value="1"/>
</dbReference>
<dbReference type="FunFam" id="3.40.50.1970:FF:000001">
    <property type="entry name" value="3-dehydroquinate synthase"/>
    <property type="match status" value="1"/>
</dbReference>
<dbReference type="Gene3D" id="3.40.50.1970">
    <property type="match status" value="1"/>
</dbReference>
<dbReference type="Gene3D" id="1.20.1090.10">
    <property type="entry name" value="Dehydroquinate synthase-like - alpha domain"/>
    <property type="match status" value="1"/>
</dbReference>
<dbReference type="HAMAP" id="MF_00110">
    <property type="entry name" value="DHQ_synthase"/>
    <property type="match status" value="1"/>
</dbReference>
<dbReference type="InterPro" id="IPR050071">
    <property type="entry name" value="Dehydroquinate_synthase"/>
</dbReference>
<dbReference type="InterPro" id="IPR016037">
    <property type="entry name" value="DHQ_synth_AroB"/>
</dbReference>
<dbReference type="InterPro" id="IPR030963">
    <property type="entry name" value="DHQ_synth_fam"/>
</dbReference>
<dbReference type="InterPro" id="IPR030960">
    <property type="entry name" value="DHQS/DOIS_N"/>
</dbReference>
<dbReference type="InterPro" id="IPR056179">
    <property type="entry name" value="DHQS_C"/>
</dbReference>
<dbReference type="NCBIfam" id="TIGR01357">
    <property type="entry name" value="aroB"/>
    <property type="match status" value="1"/>
</dbReference>
<dbReference type="PANTHER" id="PTHR43622">
    <property type="entry name" value="3-DEHYDROQUINATE SYNTHASE"/>
    <property type="match status" value="1"/>
</dbReference>
<dbReference type="PANTHER" id="PTHR43622:SF7">
    <property type="entry name" value="3-DEHYDROQUINATE SYNTHASE, CHLOROPLASTIC"/>
    <property type="match status" value="1"/>
</dbReference>
<dbReference type="Pfam" id="PF01761">
    <property type="entry name" value="DHQ_synthase"/>
    <property type="match status" value="1"/>
</dbReference>
<dbReference type="Pfam" id="PF24621">
    <property type="entry name" value="DHQS_C"/>
    <property type="match status" value="1"/>
</dbReference>
<dbReference type="PIRSF" id="PIRSF001455">
    <property type="entry name" value="DHQ_synth"/>
    <property type="match status" value="1"/>
</dbReference>
<dbReference type="SUPFAM" id="SSF56796">
    <property type="entry name" value="Dehydroquinate synthase-like"/>
    <property type="match status" value="1"/>
</dbReference>
<evidence type="ECO:0000255" key="1">
    <source>
        <dbReference type="HAMAP-Rule" id="MF_00110"/>
    </source>
</evidence>
<feature type="chain" id="PRO_0000140761" description="3-dehydroquinate synthase">
    <location>
        <begin position="1"/>
        <end position="369"/>
    </location>
</feature>
<feature type="binding site" evidence="1">
    <location>
        <begin position="78"/>
        <end position="83"/>
    </location>
    <ligand>
        <name>NAD(+)</name>
        <dbReference type="ChEBI" id="CHEBI:57540"/>
    </ligand>
</feature>
<feature type="binding site" evidence="1">
    <location>
        <begin position="112"/>
        <end position="116"/>
    </location>
    <ligand>
        <name>NAD(+)</name>
        <dbReference type="ChEBI" id="CHEBI:57540"/>
    </ligand>
</feature>
<feature type="binding site" evidence="1">
    <location>
        <begin position="136"/>
        <end position="137"/>
    </location>
    <ligand>
        <name>NAD(+)</name>
        <dbReference type="ChEBI" id="CHEBI:57540"/>
    </ligand>
</feature>
<feature type="binding site" evidence="1">
    <location>
        <position position="149"/>
    </location>
    <ligand>
        <name>NAD(+)</name>
        <dbReference type="ChEBI" id="CHEBI:57540"/>
    </ligand>
</feature>
<feature type="binding site" evidence="1">
    <location>
        <position position="158"/>
    </location>
    <ligand>
        <name>NAD(+)</name>
        <dbReference type="ChEBI" id="CHEBI:57540"/>
    </ligand>
</feature>
<feature type="binding site" evidence="1">
    <location>
        <begin position="176"/>
        <end position="179"/>
    </location>
    <ligand>
        <name>NAD(+)</name>
        <dbReference type="ChEBI" id="CHEBI:57540"/>
    </ligand>
</feature>
<feature type="binding site" evidence="1">
    <location>
        <position position="191"/>
    </location>
    <ligand>
        <name>Zn(2+)</name>
        <dbReference type="ChEBI" id="CHEBI:29105"/>
    </ligand>
</feature>
<feature type="binding site" evidence="1">
    <location>
        <position position="254"/>
    </location>
    <ligand>
        <name>Zn(2+)</name>
        <dbReference type="ChEBI" id="CHEBI:29105"/>
    </ligand>
</feature>
<feature type="binding site" evidence="1">
    <location>
        <position position="271"/>
    </location>
    <ligand>
        <name>Zn(2+)</name>
        <dbReference type="ChEBI" id="CHEBI:29105"/>
    </ligand>
</feature>
<keyword id="KW-0028">Amino-acid biosynthesis</keyword>
<keyword id="KW-0057">Aromatic amino acid biosynthesis</keyword>
<keyword id="KW-0170">Cobalt</keyword>
<keyword id="KW-0963">Cytoplasm</keyword>
<keyword id="KW-0456">Lyase</keyword>
<keyword id="KW-0479">Metal-binding</keyword>
<keyword id="KW-0520">NAD</keyword>
<keyword id="KW-0547">Nucleotide-binding</keyword>
<keyword id="KW-1185">Reference proteome</keyword>
<keyword id="KW-0862">Zinc</keyword>
<proteinExistence type="inferred from homology"/>
<accession>Q82TB9</accession>
<protein>
    <recommendedName>
        <fullName evidence="1">3-dehydroquinate synthase</fullName>
        <shortName evidence="1">DHQS</shortName>
        <ecNumber evidence="1">4.2.3.4</ecNumber>
    </recommendedName>
</protein>
<gene>
    <name evidence="1" type="primary">aroB</name>
    <name type="ordered locus">NE1981</name>
</gene>
<organism>
    <name type="scientific">Nitrosomonas europaea (strain ATCC 19718 / CIP 103999 / KCTC 2705 / NBRC 14298)</name>
    <dbReference type="NCBI Taxonomy" id="228410"/>
    <lineage>
        <taxon>Bacteria</taxon>
        <taxon>Pseudomonadati</taxon>
        <taxon>Pseudomonadota</taxon>
        <taxon>Betaproteobacteria</taxon>
        <taxon>Nitrosomonadales</taxon>
        <taxon>Nitrosomonadaceae</taxon>
        <taxon>Nitrosomonas</taxon>
    </lineage>
</organism>
<sequence>MNAIESIEVALDTLPENRSYSIHIGQGLLSRMDLLLPHLPGKKAAIVTNTTIAPLYLEKLRSALAEHHVETFAITLPDGERYKHWETLNLIFDALLEHRCERRTPLIALGGGVIGDLTGFAAATYLRGVPFIQIPTTLLAQVDSSVGGKTGINHPLGKNMIGAFYQPQLVLTDSATLTTLPDRELRAGIAEIIKYGLIYDADFFDWLEQHMNSLLARDPAAVNYAIRRSCEIKAEIVSLDERESGLRALLNLGHTFGHAIENAMGYGAWLHGEAVAAGTLMAADLSRRLQRITSQEVDRIRYLFENTGLPVKGPRISPERYLESMQLDKKVKEGAIRFILLDSIGKASPGDTVPTPLLLETLSACVADA</sequence>